<sequence length="109" mass="12594">MSAQPVDIQIFGRSLRVNCPPDQRDALNQAADDLNQRLQDLKERTRVTNTEQLVFIAALNISYELAQEKAKTRDYAASMEQRIRMLQQTIEQALLEQGRITEKTNQNFE</sequence>
<organism>
    <name type="scientific">Escherichia coli (strain SMS-3-5 / SECEC)</name>
    <dbReference type="NCBI Taxonomy" id="439855"/>
    <lineage>
        <taxon>Bacteria</taxon>
        <taxon>Pseudomonadati</taxon>
        <taxon>Pseudomonadota</taxon>
        <taxon>Gammaproteobacteria</taxon>
        <taxon>Enterobacterales</taxon>
        <taxon>Enterobacteriaceae</taxon>
        <taxon>Escherichia</taxon>
    </lineage>
</organism>
<accession>B1LDB2</accession>
<feature type="chain" id="PRO_0000345645" description="Cell division protein ZapA">
    <location>
        <begin position="1"/>
        <end position="109"/>
    </location>
</feature>
<feature type="coiled-coil region" evidence="1">
    <location>
        <begin position="21"/>
        <end position="99"/>
    </location>
</feature>
<name>ZAPA_ECOSM</name>
<protein>
    <recommendedName>
        <fullName evidence="1">Cell division protein ZapA</fullName>
    </recommendedName>
    <alternativeName>
        <fullName evidence="1">Z ring-associated protein ZapA</fullName>
    </alternativeName>
</protein>
<reference key="1">
    <citation type="journal article" date="2008" name="J. Bacteriol.">
        <title>Insights into the environmental resistance gene pool from the genome sequence of the multidrug-resistant environmental isolate Escherichia coli SMS-3-5.</title>
        <authorList>
            <person name="Fricke W.F."/>
            <person name="Wright M.S."/>
            <person name="Lindell A.H."/>
            <person name="Harkins D.M."/>
            <person name="Baker-Austin C."/>
            <person name="Ravel J."/>
            <person name="Stepanauskas R."/>
        </authorList>
    </citation>
    <scope>NUCLEOTIDE SEQUENCE [LARGE SCALE GENOMIC DNA]</scope>
    <source>
        <strain>SMS-3-5 / SECEC</strain>
    </source>
</reference>
<gene>
    <name evidence="1" type="primary">zapA</name>
    <name type="ordered locus">EcSMS35_3044</name>
</gene>
<comment type="function">
    <text evidence="1">Activator of cell division through the inhibition of FtsZ GTPase activity, therefore promoting FtsZ assembly into bundles of protofilaments necessary for the formation of the division Z ring. It is recruited early at mid-cell but it is not essential for cell division.</text>
</comment>
<comment type="subunit">
    <text evidence="1">Homodimer. Interacts with FtsZ.</text>
</comment>
<comment type="subcellular location">
    <subcellularLocation>
        <location evidence="1">Cytoplasm</location>
    </subcellularLocation>
    <text evidence="1">Localizes at mid-cell.</text>
</comment>
<comment type="similarity">
    <text evidence="1">Belongs to the ZapA family. Type 1 subfamily.</text>
</comment>
<evidence type="ECO:0000255" key="1">
    <source>
        <dbReference type="HAMAP-Rule" id="MF_02012"/>
    </source>
</evidence>
<dbReference type="EMBL" id="CP000970">
    <property type="protein sequence ID" value="ACB17847.1"/>
    <property type="molecule type" value="Genomic_DNA"/>
</dbReference>
<dbReference type="RefSeq" id="WP_001276008.1">
    <property type="nucleotide sequence ID" value="NC_010498.1"/>
</dbReference>
<dbReference type="SMR" id="B1LDB2"/>
<dbReference type="GeneID" id="93779091"/>
<dbReference type="KEGG" id="ecm:EcSMS35_3044"/>
<dbReference type="HOGENOM" id="CLU_116623_3_0_6"/>
<dbReference type="Proteomes" id="UP000007011">
    <property type="component" value="Chromosome"/>
</dbReference>
<dbReference type="GO" id="GO:0032153">
    <property type="term" value="C:cell division site"/>
    <property type="evidence" value="ECO:0007669"/>
    <property type="project" value="TreeGrafter"/>
</dbReference>
<dbReference type="GO" id="GO:0030428">
    <property type="term" value="C:cell septum"/>
    <property type="evidence" value="ECO:0007669"/>
    <property type="project" value="TreeGrafter"/>
</dbReference>
<dbReference type="GO" id="GO:0005829">
    <property type="term" value="C:cytosol"/>
    <property type="evidence" value="ECO:0007669"/>
    <property type="project" value="TreeGrafter"/>
</dbReference>
<dbReference type="GO" id="GO:0005886">
    <property type="term" value="C:plasma membrane"/>
    <property type="evidence" value="ECO:0007669"/>
    <property type="project" value="UniProtKB-UniRule"/>
</dbReference>
<dbReference type="GO" id="GO:0000917">
    <property type="term" value="P:division septum assembly"/>
    <property type="evidence" value="ECO:0007669"/>
    <property type="project" value="UniProtKB-KW"/>
</dbReference>
<dbReference type="GO" id="GO:0043093">
    <property type="term" value="P:FtsZ-dependent cytokinesis"/>
    <property type="evidence" value="ECO:0007669"/>
    <property type="project" value="TreeGrafter"/>
</dbReference>
<dbReference type="GO" id="GO:0000921">
    <property type="term" value="P:septin ring assembly"/>
    <property type="evidence" value="ECO:0007669"/>
    <property type="project" value="TreeGrafter"/>
</dbReference>
<dbReference type="FunFam" id="1.20.5.50:FF:000001">
    <property type="entry name" value="Cell division protein ZapA"/>
    <property type="match status" value="1"/>
</dbReference>
<dbReference type="FunFam" id="3.30.160.880:FF:000001">
    <property type="entry name" value="Cell division protein ZapA"/>
    <property type="match status" value="1"/>
</dbReference>
<dbReference type="Gene3D" id="1.20.5.50">
    <property type="match status" value="1"/>
</dbReference>
<dbReference type="Gene3D" id="3.30.160.880">
    <property type="entry name" value="Cell division protein ZapA protomer, N-terminal domain"/>
    <property type="match status" value="1"/>
</dbReference>
<dbReference type="HAMAP" id="MF_02012">
    <property type="entry name" value="ZapA_type1"/>
    <property type="match status" value="1"/>
</dbReference>
<dbReference type="InterPro" id="IPR007838">
    <property type="entry name" value="Cell_div_ZapA-like"/>
</dbReference>
<dbReference type="InterPro" id="IPR036192">
    <property type="entry name" value="Cell_div_ZapA-like_sf"/>
</dbReference>
<dbReference type="InterPro" id="IPR023771">
    <property type="entry name" value="Cell_div_ZapA_eubact"/>
</dbReference>
<dbReference type="InterPro" id="IPR042233">
    <property type="entry name" value="Cell_div_ZapA_N"/>
</dbReference>
<dbReference type="NCBIfam" id="NF008209">
    <property type="entry name" value="PRK10972.1"/>
    <property type="match status" value="1"/>
</dbReference>
<dbReference type="PANTHER" id="PTHR34981">
    <property type="entry name" value="CELL DIVISION PROTEIN ZAPA"/>
    <property type="match status" value="1"/>
</dbReference>
<dbReference type="PANTHER" id="PTHR34981:SF1">
    <property type="entry name" value="CELL DIVISION PROTEIN ZAPA"/>
    <property type="match status" value="1"/>
</dbReference>
<dbReference type="Pfam" id="PF05164">
    <property type="entry name" value="ZapA"/>
    <property type="match status" value="1"/>
</dbReference>
<dbReference type="SUPFAM" id="SSF102829">
    <property type="entry name" value="Cell division protein ZapA-like"/>
    <property type="match status" value="1"/>
</dbReference>
<keyword id="KW-0131">Cell cycle</keyword>
<keyword id="KW-0132">Cell division</keyword>
<keyword id="KW-0175">Coiled coil</keyword>
<keyword id="KW-0963">Cytoplasm</keyword>
<keyword id="KW-0717">Septation</keyword>
<proteinExistence type="inferred from homology"/>